<accession>B5EMF9</accession>
<name>SYE1_ACIF5</name>
<gene>
    <name evidence="1" type="primary">gltX1</name>
    <name type="ordered locus">Lferr_0584</name>
</gene>
<dbReference type="EC" id="6.1.1.17" evidence="1"/>
<dbReference type="EMBL" id="CP001132">
    <property type="protein sequence ID" value="ACH82838.1"/>
    <property type="molecule type" value="Genomic_DNA"/>
</dbReference>
<dbReference type="SMR" id="B5EMF9"/>
<dbReference type="KEGG" id="afe:Lferr_0584"/>
<dbReference type="eggNOG" id="COG0008">
    <property type="taxonomic scope" value="Bacteria"/>
</dbReference>
<dbReference type="HOGENOM" id="CLU_015768_6_3_6"/>
<dbReference type="GO" id="GO:0005829">
    <property type="term" value="C:cytosol"/>
    <property type="evidence" value="ECO:0007669"/>
    <property type="project" value="TreeGrafter"/>
</dbReference>
<dbReference type="GO" id="GO:0005524">
    <property type="term" value="F:ATP binding"/>
    <property type="evidence" value="ECO:0007669"/>
    <property type="project" value="UniProtKB-UniRule"/>
</dbReference>
<dbReference type="GO" id="GO:0004818">
    <property type="term" value="F:glutamate-tRNA ligase activity"/>
    <property type="evidence" value="ECO:0007669"/>
    <property type="project" value="UniProtKB-UniRule"/>
</dbReference>
<dbReference type="GO" id="GO:0000049">
    <property type="term" value="F:tRNA binding"/>
    <property type="evidence" value="ECO:0007669"/>
    <property type="project" value="InterPro"/>
</dbReference>
<dbReference type="GO" id="GO:0008270">
    <property type="term" value="F:zinc ion binding"/>
    <property type="evidence" value="ECO:0007669"/>
    <property type="project" value="UniProtKB-UniRule"/>
</dbReference>
<dbReference type="GO" id="GO:0006424">
    <property type="term" value="P:glutamyl-tRNA aminoacylation"/>
    <property type="evidence" value="ECO:0007669"/>
    <property type="project" value="UniProtKB-UniRule"/>
</dbReference>
<dbReference type="CDD" id="cd00808">
    <property type="entry name" value="GluRS_core"/>
    <property type="match status" value="1"/>
</dbReference>
<dbReference type="FunFam" id="3.40.50.620:FF:000007">
    <property type="entry name" value="Glutamate--tRNA ligase"/>
    <property type="match status" value="1"/>
</dbReference>
<dbReference type="Gene3D" id="1.10.10.350">
    <property type="match status" value="1"/>
</dbReference>
<dbReference type="Gene3D" id="3.40.50.620">
    <property type="entry name" value="HUPs"/>
    <property type="match status" value="1"/>
</dbReference>
<dbReference type="HAMAP" id="MF_00022">
    <property type="entry name" value="Glu_tRNA_synth_type1"/>
    <property type="match status" value="1"/>
</dbReference>
<dbReference type="InterPro" id="IPR045462">
    <property type="entry name" value="aa-tRNA-synth_I_cd-bd"/>
</dbReference>
<dbReference type="InterPro" id="IPR020751">
    <property type="entry name" value="aa-tRNA-synth_I_codon-bd_sub2"/>
</dbReference>
<dbReference type="InterPro" id="IPR001412">
    <property type="entry name" value="aa-tRNA-synth_I_CS"/>
</dbReference>
<dbReference type="InterPro" id="IPR008925">
    <property type="entry name" value="aa_tRNA-synth_I_cd-bd_sf"/>
</dbReference>
<dbReference type="InterPro" id="IPR004527">
    <property type="entry name" value="Glu-tRNA-ligase_bac/mito"/>
</dbReference>
<dbReference type="InterPro" id="IPR000924">
    <property type="entry name" value="Glu/Gln-tRNA-synth"/>
</dbReference>
<dbReference type="InterPro" id="IPR020058">
    <property type="entry name" value="Glu/Gln-tRNA-synth_Ib_cat-dom"/>
</dbReference>
<dbReference type="InterPro" id="IPR049940">
    <property type="entry name" value="GluQ/Sye"/>
</dbReference>
<dbReference type="InterPro" id="IPR033910">
    <property type="entry name" value="GluRS_core"/>
</dbReference>
<dbReference type="InterPro" id="IPR014729">
    <property type="entry name" value="Rossmann-like_a/b/a_fold"/>
</dbReference>
<dbReference type="NCBIfam" id="TIGR00464">
    <property type="entry name" value="gltX_bact"/>
    <property type="match status" value="1"/>
</dbReference>
<dbReference type="PANTHER" id="PTHR43311">
    <property type="entry name" value="GLUTAMATE--TRNA LIGASE"/>
    <property type="match status" value="1"/>
</dbReference>
<dbReference type="PANTHER" id="PTHR43311:SF2">
    <property type="entry name" value="GLUTAMATE--TRNA LIGASE, MITOCHONDRIAL-RELATED"/>
    <property type="match status" value="1"/>
</dbReference>
<dbReference type="Pfam" id="PF19269">
    <property type="entry name" value="Anticodon_2"/>
    <property type="match status" value="1"/>
</dbReference>
<dbReference type="Pfam" id="PF00749">
    <property type="entry name" value="tRNA-synt_1c"/>
    <property type="match status" value="1"/>
</dbReference>
<dbReference type="PRINTS" id="PR00987">
    <property type="entry name" value="TRNASYNTHGLU"/>
</dbReference>
<dbReference type="SUPFAM" id="SSF48163">
    <property type="entry name" value="An anticodon-binding domain of class I aminoacyl-tRNA synthetases"/>
    <property type="match status" value="1"/>
</dbReference>
<dbReference type="SUPFAM" id="SSF52374">
    <property type="entry name" value="Nucleotidylyl transferase"/>
    <property type="match status" value="1"/>
</dbReference>
<dbReference type="PROSITE" id="PS00178">
    <property type="entry name" value="AA_TRNA_LIGASE_I"/>
    <property type="match status" value="1"/>
</dbReference>
<evidence type="ECO:0000255" key="1">
    <source>
        <dbReference type="HAMAP-Rule" id="MF_00022"/>
    </source>
</evidence>
<protein>
    <recommendedName>
        <fullName evidence="1">Glutamate--tRNA ligase 1</fullName>
        <ecNumber evidence="1">6.1.1.17</ecNumber>
    </recommendedName>
    <alternativeName>
        <fullName evidence="1">Glutamyl-tRNA synthetase 1</fullName>
        <shortName evidence="1">GluRS 1</shortName>
    </alternativeName>
</protein>
<comment type="function">
    <text evidence="1">Catalyzes the attachment of glutamate to tRNA(Glu) in a two-step reaction: glutamate is first activated by ATP to form Glu-AMP and then transferred to the acceptor end of tRNA(Glu).</text>
</comment>
<comment type="catalytic activity">
    <reaction evidence="1">
        <text>tRNA(Glu) + L-glutamate + ATP = L-glutamyl-tRNA(Glu) + AMP + diphosphate</text>
        <dbReference type="Rhea" id="RHEA:23540"/>
        <dbReference type="Rhea" id="RHEA-COMP:9663"/>
        <dbReference type="Rhea" id="RHEA-COMP:9680"/>
        <dbReference type="ChEBI" id="CHEBI:29985"/>
        <dbReference type="ChEBI" id="CHEBI:30616"/>
        <dbReference type="ChEBI" id="CHEBI:33019"/>
        <dbReference type="ChEBI" id="CHEBI:78442"/>
        <dbReference type="ChEBI" id="CHEBI:78520"/>
        <dbReference type="ChEBI" id="CHEBI:456215"/>
        <dbReference type="EC" id="6.1.1.17"/>
    </reaction>
</comment>
<comment type="cofactor">
    <cofactor evidence="1">
        <name>Zn(2+)</name>
        <dbReference type="ChEBI" id="CHEBI:29105"/>
    </cofactor>
    <text evidence="1">Binds 1 zinc ion per subunit.</text>
</comment>
<comment type="subunit">
    <text evidence="1">Monomer.</text>
</comment>
<comment type="subcellular location">
    <subcellularLocation>
        <location evidence="1">Cytoplasm</location>
    </subcellularLocation>
</comment>
<comment type="similarity">
    <text evidence="1">Belongs to the class-I aminoacyl-tRNA synthetase family. Glutamate--tRNA ligase type 1 subfamily.</text>
</comment>
<reference key="1">
    <citation type="submission" date="2008-08" db="EMBL/GenBank/DDBJ databases">
        <title>Complete sequence of Acidithiobacillus ferrooxidans ATCC 53993.</title>
        <authorList>
            <person name="Lucas S."/>
            <person name="Copeland A."/>
            <person name="Lapidus A."/>
            <person name="Glavina del Rio T."/>
            <person name="Dalin E."/>
            <person name="Tice H."/>
            <person name="Bruce D."/>
            <person name="Goodwin L."/>
            <person name="Pitluck S."/>
            <person name="Sims D."/>
            <person name="Brettin T."/>
            <person name="Detter J.C."/>
            <person name="Han C."/>
            <person name="Kuske C.R."/>
            <person name="Larimer F."/>
            <person name="Land M."/>
            <person name="Hauser L."/>
            <person name="Kyrpides N."/>
            <person name="Lykidis A."/>
            <person name="Borole A.P."/>
        </authorList>
    </citation>
    <scope>NUCLEOTIDE SEQUENCE [LARGE SCALE GENOMIC DNA]</scope>
    <source>
        <strain>ATCC 53993 / BNL-5-31</strain>
    </source>
</reference>
<sequence>MSVRTRFAPSPTGYLHIGGVRTALYSWLHARRQGGHFILRIEDTDVERSTPEATVAILEGMAWLGLDWDEGPFYQMRRMDRYREVLAQMLAAGTAYHCYCSREEVEAMREDQRQRGEKPRYDGRCRERTTVPEGVAPVIRFRSPDDGETVVEDLIHGTVRFQNSEMDDLIIARSDGTPTYNFCVVVDDWDMGITHVIRGDDHLNNTPRQMQILQALGARVPVYAHVPMILGPDKQKLSKRHGAVSVLEYREQGFLPDALLNFLVRLGWSHGDQEIFTREEMVEFFRIDAVNKAASAFNPEKLLWINAQHMQRLTPEGLAQHLLPYLNAVGVTEPLLASGPELPAVVALLQERSKTLVEMAAAAEMFYVAPVAGEPKDVEKHLHGQSALLATMTQALGALPNWEAAAIHSVIQELAVTHADGKMGKVAQPLRVAVAGRAVSPPIDATLALLGKEETLARLRRAAAWI</sequence>
<feature type="chain" id="PRO_0000367597" description="Glutamate--tRNA ligase 1">
    <location>
        <begin position="1"/>
        <end position="466"/>
    </location>
</feature>
<feature type="short sequence motif" description="'HIGH' region" evidence="1">
    <location>
        <begin position="9"/>
        <end position="19"/>
    </location>
</feature>
<feature type="short sequence motif" description="'KMSKS' region" evidence="1">
    <location>
        <begin position="236"/>
        <end position="240"/>
    </location>
</feature>
<feature type="binding site" evidence="1">
    <location>
        <position position="98"/>
    </location>
    <ligand>
        <name>Zn(2+)</name>
        <dbReference type="ChEBI" id="CHEBI:29105"/>
    </ligand>
</feature>
<feature type="binding site" evidence="1">
    <location>
        <position position="100"/>
    </location>
    <ligand>
        <name>Zn(2+)</name>
        <dbReference type="ChEBI" id="CHEBI:29105"/>
    </ligand>
</feature>
<feature type="binding site" evidence="1">
    <location>
        <position position="125"/>
    </location>
    <ligand>
        <name>Zn(2+)</name>
        <dbReference type="ChEBI" id="CHEBI:29105"/>
    </ligand>
</feature>
<feature type="binding site" evidence="1">
    <location>
        <position position="127"/>
    </location>
    <ligand>
        <name>Zn(2+)</name>
        <dbReference type="ChEBI" id="CHEBI:29105"/>
    </ligand>
</feature>
<feature type="binding site" evidence="1">
    <location>
        <position position="239"/>
    </location>
    <ligand>
        <name>ATP</name>
        <dbReference type="ChEBI" id="CHEBI:30616"/>
    </ligand>
</feature>
<keyword id="KW-0030">Aminoacyl-tRNA synthetase</keyword>
<keyword id="KW-0067">ATP-binding</keyword>
<keyword id="KW-0963">Cytoplasm</keyword>
<keyword id="KW-0436">Ligase</keyword>
<keyword id="KW-0479">Metal-binding</keyword>
<keyword id="KW-0547">Nucleotide-binding</keyword>
<keyword id="KW-0648">Protein biosynthesis</keyword>
<keyword id="KW-0862">Zinc</keyword>
<proteinExistence type="inferred from homology"/>
<organism>
    <name type="scientific">Acidithiobacillus ferrooxidans (strain ATCC 53993 / BNL-5-31)</name>
    <name type="common">Leptospirillum ferrooxidans (ATCC 53993)</name>
    <dbReference type="NCBI Taxonomy" id="380394"/>
    <lineage>
        <taxon>Bacteria</taxon>
        <taxon>Pseudomonadati</taxon>
        <taxon>Pseudomonadota</taxon>
        <taxon>Acidithiobacillia</taxon>
        <taxon>Acidithiobacillales</taxon>
        <taxon>Acidithiobacillaceae</taxon>
        <taxon>Acidithiobacillus</taxon>
    </lineage>
</organism>